<accession>C3MW97</accession>
<feature type="chain" id="PRO_1000202760" description="Methionine--tRNA ligase">
    <location>
        <begin position="1"/>
        <end position="573"/>
    </location>
</feature>
<feature type="short sequence motif" description="'HIGH' region">
    <location>
        <begin position="10"/>
        <end position="20"/>
    </location>
</feature>
<feature type="short sequence motif" description="'KMSKS' region">
    <location>
        <begin position="333"/>
        <end position="337"/>
    </location>
</feature>
<feature type="binding site" evidence="1">
    <location>
        <position position="143"/>
    </location>
    <ligand>
        <name>Zn(2+)</name>
        <dbReference type="ChEBI" id="CHEBI:29105"/>
    </ligand>
</feature>
<feature type="binding site" evidence="1">
    <location>
        <position position="146"/>
    </location>
    <ligand>
        <name>Zn(2+)</name>
        <dbReference type="ChEBI" id="CHEBI:29105"/>
    </ligand>
</feature>
<feature type="binding site" evidence="1">
    <location>
        <position position="156"/>
    </location>
    <ligand>
        <name>Zn(2+)</name>
        <dbReference type="ChEBI" id="CHEBI:29105"/>
    </ligand>
</feature>
<feature type="binding site" evidence="1">
    <location>
        <position position="159"/>
    </location>
    <ligand>
        <name>Zn(2+)</name>
        <dbReference type="ChEBI" id="CHEBI:29105"/>
    </ligand>
</feature>
<feature type="binding site" evidence="1">
    <location>
        <position position="336"/>
    </location>
    <ligand>
        <name>ATP</name>
        <dbReference type="ChEBI" id="CHEBI:30616"/>
    </ligand>
</feature>
<evidence type="ECO:0000255" key="1">
    <source>
        <dbReference type="HAMAP-Rule" id="MF_00098"/>
    </source>
</evidence>
<protein>
    <recommendedName>
        <fullName evidence="1">Methionine--tRNA ligase</fullName>
        <ecNumber evidence="1">6.1.1.10</ecNumber>
    </recommendedName>
    <alternativeName>
        <fullName evidence="1">Methionyl-tRNA synthetase</fullName>
        <shortName evidence="1">MetRS</shortName>
    </alternativeName>
</protein>
<keyword id="KW-0030">Aminoacyl-tRNA synthetase</keyword>
<keyword id="KW-0067">ATP-binding</keyword>
<keyword id="KW-0963">Cytoplasm</keyword>
<keyword id="KW-0436">Ligase</keyword>
<keyword id="KW-0479">Metal-binding</keyword>
<keyword id="KW-0547">Nucleotide-binding</keyword>
<keyword id="KW-0648">Protein biosynthesis</keyword>
<keyword id="KW-0862">Zinc</keyword>
<sequence length="573" mass="66549">MKVLVTSAWPYVNSVPHLGNLIGSILSADVFARYARLKYGKENVLFVSGSDEHGTPIEIEAIKRKVNPKELTDQAHEYDKHLFLNVWKISFDNYTRTESETHKKFVREFLLKLTKYVKVSEDEIPFCEYDKLYLPDRFVKGTCPYCGFEDARGDQCDNCGKLLTPSLLVNPKCSICGKAPIFKKSKHWFFDLSEFNEKIRSWISSSNEMPDNVKSVALGWVSEGLKPRSITRDNKWGIPAPFIGAEDKSIYVWFEALLGYISAVIEYFEKKGEVEKWKEYWFSNDIKSYYFIGKDNIPFHVVILPAMLMASGEEYHLPDVIAATEYLLYEGQKFSKSRKIGVWIDEAPELMDVEYWRFVLIRLRPEEKDTNFTWRETVRIVNTELNDDIGNYVNRILSMLNRYYNGIVPEFRSDALDDNDKKTISLINEIPKIVGDLFEKGKLKAGTEEMLRFVRECNAYLNLKAPWDLYKAGKEVELNNTLYIGVNSVKTIAILLYPLMPSHAQEIYDMLNMGNIENEKWDIASKLSINYGHKIGKVKVLFKKLEPEFESKIKDKLEKIRKDIEKMRPTLLK</sequence>
<comment type="function">
    <text evidence="1">Is required not only for elongation of protein synthesis but also for the initiation of all mRNA translation through initiator tRNA(fMet) aminoacylation.</text>
</comment>
<comment type="catalytic activity">
    <reaction evidence="1">
        <text>tRNA(Met) + L-methionine + ATP = L-methionyl-tRNA(Met) + AMP + diphosphate</text>
        <dbReference type="Rhea" id="RHEA:13481"/>
        <dbReference type="Rhea" id="RHEA-COMP:9667"/>
        <dbReference type="Rhea" id="RHEA-COMP:9698"/>
        <dbReference type="ChEBI" id="CHEBI:30616"/>
        <dbReference type="ChEBI" id="CHEBI:33019"/>
        <dbReference type="ChEBI" id="CHEBI:57844"/>
        <dbReference type="ChEBI" id="CHEBI:78442"/>
        <dbReference type="ChEBI" id="CHEBI:78530"/>
        <dbReference type="ChEBI" id="CHEBI:456215"/>
        <dbReference type="EC" id="6.1.1.10"/>
    </reaction>
</comment>
<comment type="cofactor">
    <cofactor evidence="1">
        <name>Zn(2+)</name>
        <dbReference type="ChEBI" id="CHEBI:29105"/>
    </cofactor>
    <text evidence="1">Binds 1 zinc ion per subunit.</text>
</comment>
<comment type="subcellular location">
    <subcellularLocation>
        <location evidence="1">Cytoplasm</location>
    </subcellularLocation>
</comment>
<comment type="similarity">
    <text evidence="1">Belongs to the class-I aminoacyl-tRNA synthetase family. MetG type 1 subfamily.</text>
</comment>
<organism>
    <name type="scientific">Saccharolobus islandicus (strain M.14.25 / Kamchatka #1)</name>
    <name type="common">Sulfolobus islandicus</name>
    <dbReference type="NCBI Taxonomy" id="427317"/>
    <lineage>
        <taxon>Archaea</taxon>
        <taxon>Thermoproteota</taxon>
        <taxon>Thermoprotei</taxon>
        <taxon>Sulfolobales</taxon>
        <taxon>Sulfolobaceae</taxon>
        <taxon>Saccharolobus</taxon>
    </lineage>
</organism>
<name>SYM_SACI4</name>
<gene>
    <name evidence="1" type="primary">metG</name>
    <name type="ordered locus">M1425_1570</name>
</gene>
<reference key="1">
    <citation type="journal article" date="2009" name="Proc. Natl. Acad. Sci. U.S.A.">
        <title>Biogeography of the Sulfolobus islandicus pan-genome.</title>
        <authorList>
            <person name="Reno M.L."/>
            <person name="Held N.L."/>
            <person name="Fields C.J."/>
            <person name="Burke P.V."/>
            <person name="Whitaker R.J."/>
        </authorList>
    </citation>
    <scope>NUCLEOTIDE SEQUENCE [LARGE SCALE GENOMIC DNA]</scope>
    <source>
        <strain>M.14.25 / Kamchatka #1</strain>
    </source>
</reference>
<dbReference type="EC" id="6.1.1.10" evidence="1"/>
<dbReference type="EMBL" id="CP001400">
    <property type="protein sequence ID" value="ACP38319.1"/>
    <property type="molecule type" value="Genomic_DNA"/>
</dbReference>
<dbReference type="SMR" id="C3MW97"/>
<dbReference type="KEGG" id="sia:M1425_1570"/>
<dbReference type="HOGENOM" id="CLU_009710_1_2_2"/>
<dbReference type="Proteomes" id="UP000001350">
    <property type="component" value="Chromosome"/>
</dbReference>
<dbReference type="GO" id="GO:0017101">
    <property type="term" value="C:aminoacyl-tRNA synthetase multienzyme complex"/>
    <property type="evidence" value="ECO:0007669"/>
    <property type="project" value="TreeGrafter"/>
</dbReference>
<dbReference type="GO" id="GO:0005829">
    <property type="term" value="C:cytosol"/>
    <property type="evidence" value="ECO:0007669"/>
    <property type="project" value="TreeGrafter"/>
</dbReference>
<dbReference type="GO" id="GO:0005524">
    <property type="term" value="F:ATP binding"/>
    <property type="evidence" value="ECO:0007669"/>
    <property type="project" value="UniProtKB-UniRule"/>
</dbReference>
<dbReference type="GO" id="GO:0046872">
    <property type="term" value="F:metal ion binding"/>
    <property type="evidence" value="ECO:0007669"/>
    <property type="project" value="UniProtKB-KW"/>
</dbReference>
<dbReference type="GO" id="GO:0004825">
    <property type="term" value="F:methionine-tRNA ligase activity"/>
    <property type="evidence" value="ECO:0007669"/>
    <property type="project" value="UniProtKB-UniRule"/>
</dbReference>
<dbReference type="GO" id="GO:0006431">
    <property type="term" value="P:methionyl-tRNA aminoacylation"/>
    <property type="evidence" value="ECO:0007669"/>
    <property type="project" value="UniProtKB-UniRule"/>
</dbReference>
<dbReference type="CDD" id="cd07957">
    <property type="entry name" value="Anticodon_Ia_Met"/>
    <property type="match status" value="1"/>
</dbReference>
<dbReference type="CDD" id="cd00814">
    <property type="entry name" value="MetRS_core"/>
    <property type="match status" value="1"/>
</dbReference>
<dbReference type="FunFam" id="2.20.28.20:FF:000001">
    <property type="entry name" value="Methionine--tRNA ligase"/>
    <property type="match status" value="1"/>
</dbReference>
<dbReference type="Gene3D" id="3.40.50.620">
    <property type="entry name" value="HUPs"/>
    <property type="match status" value="1"/>
</dbReference>
<dbReference type="Gene3D" id="1.10.730.10">
    <property type="entry name" value="Isoleucyl-tRNA Synthetase, Domain 1"/>
    <property type="match status" value="1"/>
</dbReference>
<dbReference type="Gene3D" id="2.20.28.20">
    <property type="entry name" value="Methionyl-tRNA synthetase, Zn-domain"/>
    <property type="match status" value="1"/>
</dbReference>
<dbReference type="HAMAP" id="MF_00098">
    <property type="entry name" value="Met_tRNA_synth_type1"/>
    <property type="match status" value="1"/>
</dbReference>
<dbReference type="InterPro" id="IPR041872">
    <property type="entry name" value="Anticodon_Met"/>
</dbReference>
<dbReference type="InterPro" id="IPR023458">
    <property type="entry name" value="Met-tRNA_ligase_1"/>
</dbReference>
<dbReference type="InterPro" id="IPR014758">
    <property type="entry name" value="Met-tRNA_synth"/>
</dbReference>
<dbReference type="InterPro" id="IPR015413">
    <property type="entry name" value="Methionyl/Leucyl_tRNA_Synth"/>
</dbReference>
<dbReference type="InterPro" id="IPR033911">
    <property type="entry name" value="MetRS_core"/>
</dbReference>
<dbReference type="InterPro" id="IPR029038">
    <property type="entry name" value="MetRS_Zn"/>
</dbReference>
<dbReference type="InterPro" id="IPR014729">
    <property type="entry name" value="Rossmann-like_a/b/a_fold"/>
</dbReference>
<dbReference type="InterPro" id="IPR009080">
    <property type="entry name" value="tRNAsynth_Ia_anticodon-bd"/>
</dbReference>
<dbReference type="NCBIfam" id="TIGR00398">
    <property type="entry name" value="metG"/>
    <property type="match status" value="1"/>
</dbReference>
<dbReference type="PANTHER" id="PTHR45765">
    <property type="entry name" value="METHIONINE--TRNA LIGASE"/>
    <property type="match status" value="1"/>
</dbReference>
<dbReference type="PANTHER" id="PTHR45765:SF1">
    <property type="entry name" value="METHIONINE--TRNA LIGASE, CYTOPLASMIC"/>
    <property type="match status" value="1"/>
</dbReference>
<dbReference type="Pfam" id="PF19303">
    <property type="entry name" value="Anticodon_3"/>
    <property type="match status" value="1"/>
</dbReference>
<dbReference type="Pfam" id="PF09334">
    <property type="entry name" value="tRNA-synt_1g"/>
    <property type="match status" value="1"/>
</dbReference>
<dbReference type="PRINTS" id="PR01041">
    <property type="entry name" value="TRNASYNTHMET"/>
</dbReference>
<dbReference type="SUPFAM" id="SSF47323">
    <property type="entry name" value="Anticodon-binding domain of a subclass of class I aminoacyl-tRNA synthetases"/>
    <property type="match status" value="1"/>
</dbReference>
<dbReference type="SUPFAM" id="SSF57770">
    <property type="entry name" value="Methionyl-tRNA synthetase (MetRS), Zn-domain"/>
    <property type="match status" value="1"/>
</dbReference>
<dbReference type="SUPFAM" id="SSF52374">
    <property type="entry name" value="Nucleotidylyl transferase"/>
    <property type="match status" value="1"/>
</dbReference>
<proteinExistence type="inferred from homology"/>